<keyword id="KW-0227">DNA damage</keyword>
<keyword id="KW-0234">DNA repair</keyword>
<keyword id="KW-0238">DNA-binding</keyword>
<keyword id="KW-0326">Glycosidase</keyword>
<keyword id="KW-0378">Hydrolase</keyword>
<keyword id="KW-0456">Lyase</keyword>
<keyword id="KW-0479">Metal-binding</keyword>
<keyword id="KW-0511">Multifunctional enzyme</keyword>
<keyword id="KW-0862">Zinc</keyword>
<keyword id="KW-0863">Zinc-finger</keyword>
<reference key="1">
    <citation type="journal article" date="2003" name="Nature">
        <title>Genome divergence in two Prochlorococcus ecotypes reflects oceanic niche differentiation.</title>
        <authorList>
            <person name="Rocap G."/>
            <person name="Larimer F.W."/>
            <person name="Lamerdin J.E."/>
            <person name="Malfatti S."/>
            <person name="Chain P."/>
            <person name="Ahlgren N.A."/>
            <person name="Arellano A."/>
            <person name="Coleman M."/>
            <person name="Hauser L."/>
            <person name="Hess W.R."/>
            <person name="Johnson Z.I."/>
            <person name="Land M.L."/>
            <person name="Lindell D."/>
            <person name="Post A.F."/>
            <person name="Regala W."/>
            <person name="Shah M."/>
            <person name="Shaw S.L."/>
            <person name="Steglich C."/>
            <person name="Sullivan M.B."/>
            <person name="Ting C.S."/>
            <person name="Tolonen A."/>
            <person name="Webb E.A."/>
            <person name="Zinser E.R."/>
            <person name="Chisholm S.W."/>
        </authorList>
    </citation>
    <scope>NUCLEOTIDE SEQUENCE [LARGE SCALE GENOMIC DNA]</scope>
    <source>
        <strain>CCMP1986 / NIES-2087 / MED4</strain>
    </source>
</reference>
<feature type="initiator methionine" description="Removed" evidence="1">
    <location>
        <position position="1"/>
    </location>
</feature>
<feature type="chain" id="PRO_0000170851" description="Formamidopyrimidine-DNA glycosylase">
    <location>
        <begin position="2"/>
        <end position="292"/>
    </location>
</feature>
<feature type="zinc finger region" description="FPG-type" evidence="2">
    <location>
        <begin position="258"/>
        <end position="292"/>
    </location>
</feature>
<feature type="active site" description="Schiff-base intermediate with DNA" evidence="2">
    <location>
        <position position="2"/>
    </location>
</feature>
<feature type="active site" description="Proton donor" evidence="2">
    <location>
        <position position="3"/>
    </location>
</feature>
<feature type="active site" description="Proton donor; for beta-elimination activity" evidence="2">
    <location>
        <position position="60"/>
    </location>
</feature>
<feature type="active site" description="Proton donor; for delta-elimination activity" evidence="2">
    <location>
        <position position="282"/>
    </location>
</feature>
<feature type="binding site" evidence="2">
    <location>
        <position position="109"/>
    </location>
    <ligand>
        <name>DNA</name>
        <dbReference type="ChEBI" id="CHEBI:16991"/>
    </ligand>
</feature>
<feature type="binding site" evidence="2">
    <location>
        <position position="128"/>
    </location>
    <ligand>
        <name>DNA</name>
        <dbReference type="ChEBI" id="CHEBI:16991"/>
    </ligand>
</feature>
<feature type="binding site" evidence="2">
    <location>
        <position position="173"/>
    </location>
    <ligand>
        <name>DNA</name>
        <dbReference type="ChEBI" id="CHEBI:16991"/>
    </ligand>
</feature>
<gene>
    <name evidence="2" type="primary">mutM</name>
    <name evidence="2" type="synonym">fpg</name>
    <name type="ordered locus">PMM0328</name>
</gene>
<protein>
    <recommendedName>
        <fullName evidence="2">Formamidopyrimidine-DNA glycosylase</fullName>
        <shortName evidence="2">Fapy-DNA glycosylase</shortName>
        <ecNumber evidence="2">3.2.2.23</ecNumber>
    </recommendedName>
    <alternativeName>
        <fullName evidence="2">DNA-(apurinic or apyrimidinic site) lyase MutM</fullName>
        <shortName evidence="2">AP lyase MutM</shortName>
        <ecNumber evidence="2">4.2.99.18</ecNumber>
    </alternativeName>
</protein>
<organism>
    <name type="scientific">Prochlorococcus marinus subsp. pastoris (strain CCMP1986 / NIES-2087 / MED4)</name>
    <dbReference type="NCBI Taxonomy" id="59919"/>
    <lineage>
        <taxon>Bacteria</taxon>
        <taxon>Bacillati</taxon>
        <taxon>Cyanobacteriota</taxon>
        <taxon>Cyanophyceae</taxon>
        <taxon>Synechococcales</taxon>
        <taxon>Prochlorococcaceae</taxon>
        <taxon>Prochlorococcus</taxon>
    </lineage>
</organism>
<evidence type="ECO:0000250" key="1"/>
<evidence type="ECO:0000255" key="2">
    <source>
        <dbReference type="HAMAP-Rule" id="MF_00103"/>
    </source>
</evidence>
<comment type="function">
    <text evidence="2">Involved in base excision repair of DNA damaged by oxidation or by mutagenic agents. Acts as a DNA glycosylase that recognizes and removes damaged bases. Has a preference for oxidized purines, such as 7,8-dihydro-8-oxoguanine (8-oxoG). Has AP (apurinic/apyrimidinic) lyase activity and introduces nicks in the DNA strand. Cleaves the DNA backbone by beta-delta elimination to generate a single-strand break at the site of the removed base with both 3'- and 5'-phosphates.</text>
</comment>
<comment type="catalytic activity">
    <reaction evidence="2">
        <text>Hydrolysis of DNA containing ring-opened 7-methylguanine residues, releasing 2,6-diamino-4-hydroxy-5-(N-methyl)formamidopyrimidine.</text>
        <dbReference type="EC" id="3.2.2.23"/>
    </reaction>
</comment>
<comment type="catalytic activity">
    <reaction evidence="2">
        <text>2'-deoxyribonucleotide-(2'-deoxyribose 5'-phosphate)-2'-deoxyribonucleotide-DNA = a 3'-end 2'-deoxyribonucleotide-(2,3-dehydro-2,3-deoxyribose 5'-phosphate)-DNA + a 5'-end 5'-phospho-2'-deoxyribonucleoside-DNA + H(+)</text>
        <dbReference type="Rhea" id="RHEA:66592"/>
        <dbReference type="Rhea" id="RHEA-COMP:13180"/>
        <dbReference type="Rhea" id="RHEA-COMP:16897"/>
        <dbReference type="Rhea" id="RHEA-COMP:17067"/>
        <dbReference type="ChEBI" id="CHEBI:15378"/>
        <dbReference type="ChEBI" id="CHEBI:136412"/>
        <dbReference type="ChEBI" id="CHEBI:157695"/>
        <dbReference type="ChEBI" id="CHEBI:167181"/>
        <dbReference type="EC" id="4.2.99.18"/>
    </reaction>
</comment>
<comment type="cofactor">
    <cofactor evidence="2">
        <name>Zn(2+)</name>
        <dbReference type="ChEBI" id="CHEBI:29105"/>
    </cofactor>
    <text evidence="2">Binds 1 zinc ion per subunit.</text>
</comment>
<comment type="subunit">
    <text evidence="2">Monomer.</text>
</comment>
<comment type="similarity">
    <text evidence="2">Belongs to the FPG family.</text>
</comment>
<sequence>MPELPEVETVRRGLEQKLKNFIIKRVEICRESTVAYPIDKIDFIEGLQNSLLYKWNRRGKYLIAELKKTVSNNNDANEISFVENGVLVVHLRMTGYFTFNNTLTNPCKHTRIRLFDNNNNELRYIDVRSFGQMWWVRDGLSPNNIIKGLGTLGPEPFSESFNVNYLKKVISNKTRSIKSILLDQTIIAGIGNIYADESLYSAGISPFREARTINKNEIKRLRRAVVDVLKKSIGAGGTTFSDFRDLEGENGNFGLQTNVYRRTGKKCRQCKNLIERQKISGRSTHWCRKCQK</sequence>
<name>FPG_PROMP</name>
<accession>Q7V2X4</accession>
<proteinExistence type="inferred from homology"/>
<dbReference type="EC" id="3.2.2.23" evidence="2"/>
<dbReference type="EC" id="4.2.99.18" evidence="2"/>
<dbReference type="EMBL" id="BX548174">
    <property type="protein sequence ID" value="CAE18787.1"/>
    <property type="molecule type" value="Genomic_DNA"/>
</dbReference>
<dbReference type="RefSeq" id="WP_011131965.1">
    <property type="nucleotide sequence ID" value="NC_005072.1"/>
</dbReference>
<dbReference type="SMR" id="Q7V2X4"/>
<dbReference type="STRING" id="59919.PMM0328"/>
<dbReference type="KEGG" id="pmm:PMM0328"/>
<dbReference type="eggNOG" id="COG0266">
    <property type="taxonomic scope" value="Bacteria"/>
</dbReference>
<dbReference type="HOGENOM" id="CLU_038423_1_2_3"/>
<dbReference type="OrthoDB" id="9800855at2"/>
<dbReference type="Proteomes" id="UP000001026">
    <property type="component" value="Chromosome"/>
</dbReference>
<dbReference type="GO" id="GO:0034039">
    <property type="term" value="F:8-oxo-7,8-dihydroguanine DNA N-glycosylase activity"/>
    <property type="evidence" value="ECO:0007669"/>
    <property type="project" value="TreeGrafter"/>
</dbReference>
<dbReference type="GO" id="GO:0140078">
    <property type="term" value="F:class I DNA-(apurinic or apyrimidinic site) endonuclease activity"/>
    <property type="evidence" value="ECO:0007669"/>
    <property type="project" value="UniProtKB-EC"/>
</dbReference>
<dbReference type="GO" id="GO:0003684">
    <property type="term" value="F:damaged DNA binding"/>
    <property type="evidence" value="ECO:0007669"/>
    <property type="project" value="InterPro"/>
</dbReference>
<dbReference type="GO" id="GO:0008270">
    <property type="term" value="F:zinc ion binding"/>
    <property type="evidence" value="ECO:0007669"/>
    <property type="project" value="UniProtKB-UniRule"/>
</dbReference>
<dbReference type="GO" id="GO:0006284">
    <property type="term" value="P:base-excision repair"/>
    <property type="evidence" value="ECO:0007669"/>
    <property type="project" value="InterPro"/>
</dbReference>
<dbReference type="CDD" id="cd08966">
    <property type="entry name" value="EcFpg-like_N"/>
    <property type="match status" value="1"/>
</dbReference>
<dbReference type="FunFam" id="1.10.8.50:FF:000003">
    <property type="entry name" value="Formamidopyrimidine-DNA glycosylase"/>
    <property type="match status" value="1"/>
</dbReference>
<dbReference type="Gene3D" id="1.10.8.50">
    <property type="match status" value="1"/>
</dbReference>
<dbReference type="Gene3D" id="3.20.190.10">
    <property type="entry name" value="MutM-like, N-terminal"/>
    <property type="match status" value="1"/>
</dbReference>
<dbReference type="HAMAP" id="MF_00103">
    <property type="entry name" value="Fapy_DNA_glycosyl"/>
    <property type="match status" value="1"/>
</dbReference>
<dbReference type="InterPro" id="IPR015886">
    <property type="entry name" value="DNA_glyclase/AP_lyase_DNA-bd"/>
</dbReference>
<dbReference type="InterPro" id="IPR015887">
    <property type="entry name" value="DNA_glyclase_Znf_dom_DNA_BS"/>
</dbReference>
<dbReference type="InterPro" id="IPR020629">
    <property type="entry name" value="Formamido-pyr_DNA_Glyclase"/>
</dbReference>
<dbReference type="InterPro" id="IPR012319">
    <property type="entry name" value="FPG_cat"/>
</dbReference>
<dbReference type="InterPro" id="IPR035937">
    <property type="entry name" value="MutM-like_N-ter"/>
</dbReference>
<dbReference type="InterPro" id="IPR010979">
    <property type="entry name" value="Ribosomal_uS13-like_H2TH"/>
</dbReference>
<dbReference type="InterPro" id="IPR000214">
    <property type="entry name" value="Znf_DNA_glyclase/AP_lyase"/>
</dbReference>
<dbReference type="InterPro" id="IPR010663">
    <property type="entry name" value="Znf_FPG/IleRS"/>
</dbReference>
<dbReference type="NCBIfam" id="TIGR00577">
    <property type="entry name" value="fpg"/>
    <property type="match status" value="1"/>
</dbReference>
<dbReference type="NCBIfam" id="NF002211">
    <property type="entry name" value="PRK01103.1"/>
    <property type="match status" value="1"/>
</dbReference>
<dbReference type="NCBIfam" id="NF010551">
    <property type="entry name" value="PRK13945.1"/>
    <property type="match status" value="1"/>
</dbReference>
<dbReference type="PANTHER" id="PTHR22993">
    <property type="entry name" value="FORMAMIDOPYRIMIDINE-DNA GLYCOSYLASE"/>
    <property type="match status" value="1"/>
</dbReference>
<dbReference type="PANTHER" id="PTHR22993:SF9">
    <property type="entry name" value="FORMAMIDOPYRIMIDINE-DNA GLYCOSYLASE"/>
    <property type="match status" value="1"/>
</dbReference>
<dbReference type="Pfam" id="PF01149">
    <property type="entry name" value="Fapy_DNA_glyco"/>
    <property type="match status" value="1"/>
</dbReference>
<dbReference type="Pfam" id="PF06831">
    <property type="entry name" value="H2TH"/>
    <property type="match status" value="1"/>
</dbReference>
<dbReference type="Pfam" id="PF06827">
    <property type="entry name" value="zf-FPG_IleRS"/>
    <property type="match status" value="1"/>
</dbReference>
<dbReference type="SMART" id="SM00898">
    <property type="entry name" value="Fapy_DNA_glyco"/>
    <property type="match status" value="1"/>
</dbReference>
<dbReference type="SMART" id="SM01232">
    <property type="entry name" value="H2TH"/>
    <property type="match status" value="1"/>
</dbReference>
<dbReference type="SUPFAM" id="SSF57716">
    <property type="entry name" value="Glucocorticoid receptor-like (DNA-binding domain)"/>
    <property type="match status" value="1"/>
</dbReference>
<dbReference type="SUPFAM" id="SSF81624">
    <property type="entry name" value="N-terminal domain of MutM-like DNA repair proteins"/>
    <property type="match status" value="1"/>
</dbReference>
<dbReference type="SUPFAM" id="SSF46946">
    <property type="entry name" value="S13-like H2TH domain"/>
    <property type="match status" value="1"/>
</dbReference>
<dbReference type="PROSITE" id="PS51068">
    <property type="entry name" value="FPG_CAT"/>
    <property type="match status" value="1"/>
</dbReference>
<dbReference type="PROSITE" id="PS01242">
    <property type="entry name" value="ZF_FPG_1"/>
    <property type="match status" value="1"/>
</dbReference>
<dbReference type="PROSITE" id="PS51066">
    <property type="entry name" value="ZF_FPG_2"/>
    <property type="match status" value="1"/>
</dbReference>